<comment type="subunit">
    <text evidence="1">The basal body constitutes a major portion of the flagellar organelle and consists of five rings (E,L,P,S, and M) mounted on a central rod. The rod consists of about 26 subunits of FlgG in the distal portion, and FlgB, FlgC and FlgF are thought to build up the proximal portion of the rod with about 6 subunits each (By similarity).</text>
</comment>
<comment type="subcellular location">
    <subcellularLocation>
        <location evidence="1">Bacterial flagellum basal body</location>
    </subcellularLocation>
</comment>
<comment type="similarity">
    <text evidence="2">Belongs to the flagella basal body rod proteins family.</text>
</comment>
<comment type="sequence caution" evidence="2">
    <conflict type="erroneous initiation">
        <sequence resource="EMBL-CDS" id="AAO27034"/>
    </conflict>
</comment>
<proteinExistence type="inferred from homology"/>
<organism>
    <name type="scientific">Buchnera aphidicola subsp. Baizongia pistaciae (strain Bp)</name>
    <dbReference type="NCBI Taxonomy" id="224915"/>
    <lineage>
        <taxon>Bacteria</taxon>
        <taxon>Pseudomonadati</taxon>
        <taxon>Pseudomonadota</taxon>
        <taxon>Gammaproteobacteria</taxon>
        <taxon>Enterobacterales</taxon>
        <taxon>Erwiniaceae</taxon>
        <taxon>Buchnera</taxon>
    </lineage>
</organism>
<evidence type="ECO:0000250" key="1"/>
<evidence type="ECO:0000305" key="2"/>
<sequence length="248" mass="28549">MESIVNAIITSTNKIFENQARIANNITNISTPGFKSELELKILLPSQKDQNSQEDNFLYKQYKNKNQGTLRRTNQPLDCAIIDKNDWFVIKIDPKTIAYTKNGHFKINSNRQLTVQNHPVLGEDGEIFIPKNENIVISSDGYINIIKNNVLQHKVAQFKLKNFDINDLTYKTNGLYLLNKNNKLNHTNHKNVSNIKLVSGILEDSNVNLEENMVEMISNARKFDMQIKILSMYNENTQAASRFLNLNY</sequence>
<protein>
    <recommendedName>
        <fullName>Flagellar basal-body rod protein FlgF</fullName>
    </recommendedName>
</protein>
<accession>Q89AH8</accession>
<keyword id="KW-0975">Bacterial flagellum</keyword>
<keyword id="KW-1185">Reference proteome</keyword>
<dbReference type="EMBL" id="AE016826">
    <property type="protein sequence ID" value="AAO27034.1"/>
    <property type="status" value="ALT_INIT"/>
    <property type="molecule type" value="Genomic_DNA"/>
</dbReference>
<dbReference type="RefSeq" id="WP_011091435.1">
    <property type="nucleotide sequence ID" value="NC_004545.1"/>
</dbReference>
<dbReference type="SMR" id="Q89AH8"/>
<dbReference type="STRING" id="224915.bbp_312"/>
<dbReference type="KEGG" id="bab:bbp_312"/>
<dbReference type="eggNOG" id="COG4787">
    <property type="taxonomic scope" value="Bacteria"/>
</dbReference>
<dbReference type="HOGENOM" id="CLU_013687_1_0_6"/>
<dbReference type="Proteomes" id="UP000000601">
    <property type="component" value="Chromosome"/>
</dbReference>
<dbReference type="GO" id="GO:0009425">
    <property type="term" value="C:bacterial-type flagellum basal body"/>
    <property type="evidence" value="ECO:0007669"/>
    <property type="project" value="UniProtKB-SubCell"/>
</dbReference>
<dbReference type="GO" id="GO:0071978">
    <property type="term" value="P:bacterial-type flagellum-dependent swarming motility"/>
    <property type="evidence" value="ECO:0007669"/>
    <property type="project" value="TreeGrafter"/>
</dbReference>
<dbReference type="InterPro" id="IPR010930">
    <property type="entry name" value="Flg_bb/hook_C_dom"/>
</dbReference>
<dbReference type="InterPro" id="IPR037925">
    <property type="entry name" value="FlgE/F/G-like"/>
</dbReference>
<dbReference type="InterPro" id="IPR053967">
    <property type="entry name" value="LlgE_F_G-like_D1"/>
</dbReference>
<dbReference type="NCBIfam" id="NF009281">
    <property type="entry name" value="PRK12641.1"/>
    <property type="match status" value="1"/>
</dbReference>
<dbReference type="PANTHER" id="PTHR30435:SF18">
    <property type="entry name" value="FLAGELLAR BASAL-BODY ROD PROTEIN FLGF"/>
    <property type="match status" value="1"/>
</dbReference>
<dbReference type="PANTHER" id="PTHR30435">
    <property type="entry name" value="FLAGELLAR PROTEIN"/>
    <property type="match status" value="1"/>
</dbReference>
<dbReference type="Pfam" id="PF06429">
    <property type="entry name" value="Flg_bbr_C"/>
    <property type="match status" value="1"/>
</dbReference>
<dbReference type="Pfam" id="PF22692">
    <property type="entry name" value="LlgE_F_G_D1"/>
    <property type="match status" value="1"/>
</dbReference>
<dbReference type="SUPFAM" id="SSF117143">
    <property type="entry name" value="Flagellar hook protein flgE"/>
    <property type="match status" value="1"/>
</dbReference>
<name>FLGF_BUCBP</name>
<feature type="chain" id="PRO_0000180836" description="Flagellar basal-body rod protein FlgF">
    <location>
        <begin position="1"/>
        <end position="248"/>
    </location>
</feature>
<reference key="1">
    <citation type="journal article" date="2003" name="Proc. Natl. Acad. Sci. U.S.A.">
        <title>Reductive genome evolution in Buchnera aphidicola.</title>
        <authorList>
            <person name="van Ham R.C.H.J."/>
            <person name="Kamerbeek J."/>
            <person name="Palacios C."/>
            <person name="Rausell C."/>
            <person name="Abascal F."/>
            <person name="Bastolla U."/>
            <person name="Fernandez J.M."/>
            <person name="Jimenez L."/>
            <person name="Postigo M."/>
            <person name="Silva F.J."/>
            <person name="Tamames J."/>
            <person name="Viguera E."/>
            <person name="Latorre A."/>
            <person name="Valencia A."/>
            <person name="Moran F."/>
            <person name="Moya A."/>
        </authorList>
    </citation>
    <scope>NUCLEOTIDE SEQUENCE [LARGE SCALE GENOMIC DNA]</scope>
    <source>
        <strain>Bp</strain>
    </source>
</reference>
<gene>
    <name type="primary">flgF</name>
    <name type="ordered locus">bbp_312</name>
</gene>